<keyword id="KW-0131">Cell cycle</keyword>
<keyword id="KW-0132">Cell division</keyword>
<keyword id="KW-0963">Cytoplasm</keyword>
<keyword id="KW-1185">Reference proteome</keyword>
<keyword id="KW-0717">Septation</keyword>
<gene>
    <name evidence="1" type="primary">sepF</name>
    <name type="ordered locus">LBA0814</name>
</gene>
<reference key="1">
    <citation type="journal article" date="2005" name="Proc. Natl. Acad. Sci. U.S.A.">
        <title>Complete genome sequence of the probiotic lactic acid bacterium Lactobacillus acidophilus NCFM.</title>
        <authorList>
            <person name="Altermann E."/>
            <person name="Russell W.M."/>
            <person name="Azcarate-Peril M.A."/>
            <person name="Barrangou R."/>
            <person name="Buck B.L."/>
            <person name="McAuliffe O."/>
            <person name="Souther N."/>
            <person name="Dobson A."/>
            <person name="Duong T."/>
            <person name="Callanan M."/>
            <person name="Lick S."/>
            <person name="Hamrick A."/>
            <person name="Cano R."/>
            <person name="Klaenhammer T.R."/>
        </authorList>
    </citation>
    <scope>NUCLEOTIDE SEQUENCE [LARGE SCALE GENOMIC DNA]</scope>
    <source>
        <strain>ATCC 700396 / NCK56 / N2 / NCFM</strain>
    </source>
</reference>
<proteinExistence type="inferred from homology"/>
<sequence>MAFDKLGRFFGISNDDELANDEEYTTQNEENNEDLPLNSINRDNVVSIKSGLNSSKSKIVLYEPRVYSDAKDVAQNLLNNKAVVINFSRMEDSSARRIVDFITGTVYTLNGEIQRIGDKIFLATPPKFVTDGKISDLVDKKDNLS</sequence>
<protein>
    <recommendedName>
        <fullName evidence="1">Cell division protein SepF</fullName>
    </recommendedName>
</protein>
<feature type="chain" id="PRO_0000334015" description="Cell division protein SepF">
    <location>
        <begin position="1"/>
        <end position="145"/>
    </location>
</feature>
<organism>
    <name type="scientific">Lactobacillus acidophilus (strain ATCC 700396 / NCK56 / N2 / NCFM)</name>
    <dbReference type="NCBI Taxonomy" id="272621"/>
    <lineage>
        <taxon>Bacteria</taxon>
        <taxon>Bacillati</taxon>
        <taxon>Bacillota</taxon>
        <taxon>Bacilli</taxon>
        <taxon>Lactobacillales</taxon>
        <taxon>Lactobacillaceae</taxon>
        <taxon>Lactobacillus</taxon>
    </lineage>
</organism>
<accession>Q5FKU8</accession>
<name>SEPF_LACAC</name>
<dbReference type="EMBL" id="CP000033">
    <property type="protein sequence ID" value="AAV42676.1"/>
    <property type="molecule type" value="Genomic_DNA"/>
</dbReference>
<dbReference type="RefSeq" id="WP_011254258.1">
    <property type="nucleotide sequence ID" value="NC_006814.3"/>
</dbReference>
<dbReference type="RefSeq" id="YP_193707.1">
    <property type="nucleotide sequence ID" value="NC_006814.3"/>
</dbReference>
<dbReference type="SMR" id="Q5FKU8"/>
<dbReference type="STRING" id="272621.LBA0814"/>
<dbReference type="KEGG" id="lac:LBA0814"/>
<dbReference type="PATRIC" id="fig|272621.13.peg.775"/>
<dbReference type="eggNOG" id="COG1799">
    <property type="taxonomic scope" value="Bacteria"/>
</dbReference>
<dbReference type="HOGENOM" id="CLU_078499_4_1_9"/>
<dbReference type="OrthoDB" id="9815206at2"/>
<dbReference type="BioCyc" id="LACI272621:G1G49-826-MONOMER"/>
<dbReference type="Proteomes" id="UP000006381">
    <property type="component" value="Chromosome"/>
</dbReference>
<dbReference type="GO" id="GO:0005737">
    <property type="term" value="C:cytoplasm"/>
    <property type="evidence" value="ECO:0007669"/>
    <property type="project" value="UniProtKB-SubCell"/>
</dbReference>
<dbReference type="GO" id="GO:0000917">
    <property type="term" value="P:division septum assembly"/>
    <property type="evidence" value="ECO:0007669"/>
    <property type="project" value="UniProtKB-KW"/>
</dbReference>
<dbReference type="GO" id="GO:0043093">
    <property type="term" value="P:FtsZ-dependent cytokinesis"/>
    <property type="evidence" value="ECO:0007669"/>
    <property type="project" value="UniProtKB-UniRule"/>
</dbReference>
<dbReference type="Gene3D" id="3.30.110.150">
    <property type="entry name" value="SepF-like protein"/>
    <property type="match status" value="1"/>
</dbReference>
<dbReference type="HAMAP" id="MF_01197">
    <property type="entry name" value="SepF"/>
    <property type="match status" value="1"/>
</dbReference>
<dbReference type="InterPro" id="IPR023052">
    <property type="entry name" value="Cell_div_SepF"/>
</dbReference>
<dbReference type="InterPro" id="IPR007561">
    <property type="entry name" value="Cell_div_SepF/SepF-rel"/>
</dbReference>
<dbReference type="InterPro" id="IPR038594">
    <property type="entry name" value="SepF-like_sf"/>
</dbReference>
<dbReference type="PANTHER" id="PTHR35798">
    <property type="entry name" value="CELL DIVISION PROTEIN SEPF"/>
    <property type="match status" value="1"/>
</dbReference>
<dbReference type="PANTHER" id="PTHR35798:SF1">
    <property type="entry name" value="CELL DIVISION PROTEIN SEPF"/>
    <property type="match status" value="1"/>
</dbReference>
<dbReference type="Pfam" id="PF04472">
    <property type="entry name" value="SepF"/>
    <property type="match status" value="1"/>
</dbReference>
<evidence type="ECO:0000255" key="1">
    <source>
        <dbReference type="HAMAP-Rule" id="MF_01197"/>
    </source>
</evidence>
<comment type="function">
    <text evidence="1">Cell division protein that is part of the divisome complex and is recruited early to the Z-ring. Probably stimulates Z-ring formation, perhaps through the cross-linking of FtsZ protofilaments. Its function overlaps with FtsA.</text>
</comment>
<comment type="subunit">
    <text evidence="1">Homodimer. Interacts with FtsZ.</text>
</comment>
<comment type="subcellular location">
    <subcellularLocation>
        <location evidence="1">Cytoplasm</location>
    </subcellularLocation>
    <text evidence="1">Localizes to the division site, in a FtsZ-dependent manner.</text>
</comment>
<comment type="similarity">
    <text evidence="1">Belongs to the SepF family.</text>
</comment>